<keyword id="KW-0378">Hydrolase</keyword>
<keyword id="KW-0574">Periplasm</keyword>
<keyword id="KW-0732">Signal</keyword>
<organism>
    <name type="scientific">Salmonella heidelberg (strain SL476)</name>
    <dbReference type="NCBI Taxonomy" id="454169"/>
    <lineage>
        <taxon>Bacteria</taxon>
        <taxon>Pseudomonadati</taxon>
        <taxon>Pseudomonadota</taxon>
        <taxon>Gammaproteobacteria</taxon>
        <taxon>Enterobacterales</taxon>
        <taxon>Enterobacteriaceae</taxon>
        <taxon>Salmonella</taxon>
    </lineage>
</organism>
<gene>
    <name evidence="1" type="primary">ais</name>
    <name type="ordered locus">SeHA_C2536</name>
</gene>
<comment type="function">
    <text evidence="1">Catalyzes the dephosphorylation of heptose(II) of the outer membrane lipopolysaccharide core.</text>
</comment>
<comment type="pathway">
    <text evidence="1">Bacterial outer membrane biogenesis; lipopolysaccharide metabolism.</text>
</comment>
<comment type="subcellular location">
    <subcellularLocation>
        <location evidence="1">Periplasm</location>
    </subcellularLocation>
</comment>
<comment type="similarity">
    <text evidence="1">Belongs to the phosphoglycerate mutase family. Ais subfamily.</text>
</comment>
<feature type="signal peptide" evidence="1">
    <location>
        <begin position="1"/>
        <end position="35"/>
    </location>
</feature>
<feature type="chain" id="PRO_0000380578" description="Lipopolysaccharide core heptose(II)-phosphate phosphatase">
    <location>
        <begin position="36"/>
        <end position="201"/>
    </location>
</feature>
<reference key="1">
    <citation type="journal article" date="2011" name="J. Bacteriol.">
        <title>Comparative genomics of 28 Salmonella enterica isolates: evidence for CRISPR-mediated adaptive sublineage evolution.</title>
        <authorList>
            <person name="Fricke W.F."/>
            <person name="Mammel M.K."/>
            <person name="McDermott P.F."/>
            <person name="Tartera C."/>
            <person name="White D.G."/>
            <person name="Leclerc J.E."/>
            <person name="Ravel J."/>
            <person name="Cebula T.A."/>
        </authorList>
    </citation>
    <scope>NUCLEOTIDE SEQUENCE [LARGE SCALE GENOMIC DNA]</scope>
    <source>
        <strain>SL476</strain>
    </source>
</reference>
<dbReference type="EC" id="3.1.3.-" evidence="1"/>
<dbReference type="EMBL" id="CP001120">
    <property type="protein sequence ID" value="ACF69326.1"/>
    <property type="molecule type" value="Genomic_DNA"/>
</dbReference>
<dbReference type="SMR" id="B4TBG3"/>
<dbReference type="KEGG" id="seh:SeHA_C2536"/>
<dbReference type="HOGENOM" id="CLU_106705_1_0_6"/>
<dbReference type="UniPathway" id="UPA00451"/>
<dbReference type="Proteomes" id="UP000001866">
    <property type="component" value="Chromosome"/>
</dbReference>
<dbReference type="GO" id="GO:0042597">
    <property type="term" value="C:periplasmic space"/>
    <property type="evidence" value="ECO:0007669"/>
    <property type="project" value="UniProtKB-SubCell"/>
</dbReference>
<dbReference type="GO" id="GO:0016791">
    <property type="term" value="F:phosphatase activity"/>
    <property type="evidence" value="ECO:0007669"/>
    <property type="project" value="UniProtKB-UniRule"/>
</dbReference>
<dbReference type="GO" id="GO:0008653">
    <property type="term" value="P:lipopolysaccharide metabolic process"/>
    <property type="evidence" value="ECO:0007669"/>
    <property type="project" value="UniProtKB-UniRule"/>
</dbReference>
<dbReference type="CDD" id="cd07040">
    <property type="entry name" value="HP"/>
    <property type="match status" value="1"/>
</dbReference>
<dbReference type="Gene3D" id="3.40.50.1240">
    <property type="entry name" value="Phosphoglycerate mutase-like"/>
    <property type="match status" value="1"/>
</dbReference>
<dbReference type="HAMAP" id="MF_01868">
    <property type="entry name" value="Ais"/>
    <property type="match status" value="1"/>
</dbReference>
<dbReference type="InterPro" id="IPR013078">
    <property type="entry name" value="His_Pase_superF_clade-1"/>
</dbReference>
<dbReference type="InterPro" id="IPR029033">
    <property type="entry name" value="His_PPase_superfam"/>
</dbReference>
<dbReference type="InterPro" id="IPR011310">
    <property type="entry name" value="LipoPS_heptP_Pase"/>
</dbReference>
<dbReference type="NCBIfam" id="NF011945">
    <property type="entry name" value="PRK15416.1"/>
    <property type="match status" value="1"/>
</dbReference>
<dbReference type="Pfam" id="PF00300">
    <property type="entry name" value="His_Phos_1"/>
    <property type="match status" value="1"/>
</dbReference>
<dbReference type="PIRSF" id="PIRSF011416">
    <property type="entry name" value="Ais-TraG-AfrS"/>
    <property type="match status" value="1"/>
</dbReference>
<dbReference type="SUPFAM" id="SSF53254">
    <property type="entry name" value="Phosphoglycerate mutase-like"/>
    <property type="match status" value="1"/>
</dbReference>
<sequence length="201" mass="21967">MLAFTLRFIKNKRYLATLAGALVIIAGLTSQHAWSGNGLPQINGKALAALAKQHPVVVLFRHAERCDRSDNTCLSDSTGITVNGAQDARALGKAFSADIQNYNLYSSNTVRTIQSATWFSAGRSLTVDKKMMDCGSGIYASINTLLKKSQNKNIVIFTHNHCLTYIAKNKRGVKFDPDYLNALVMHAENGKLFLDGEFVPG</sequence>
<name>AIS_SALHS</name>
<proteinExistence type="inferred from homology"/>
<evidence type="ECO:0000255" key="1">
    <source>
        <dbReference type="HAMAP-Rule" id="MF_01868"/>
    </source>
</evidence>
<accession>B4TBG3</accession>
<protein>
    <recommendedName>
        <fullName evidence="1">Lipopolysaccharide core heptose(II)-phosphate phosphatase</fullName>
        <ecNumber evidence="1">3.1.3.-</ecNumber>
    </recommendedName>
</protein>